<evidence type="ECO:0000250" key="1"/>
<evidence type="ECO:0000269" key="2">
    <source>
    </source>
</evidence>
<evidence type="ECO:0000305" key="3"/>
<accession>O65812</accession>
<protein>
    <recommendedName>
        <fullName>Profilin-1</fullName>
    </recommendedName>
    <alternativeName>
        <fullName>Pollen allergen Hev b 8.0101</fullName>
    </alternativeName>
    <allergenName>Hev b 8.0101</allergenName>
</protein>
<sequence>MSWQTYVDERLMCEIEGNHLTAAAIIGQDGSVWAQSSNFPQFKSEEITAIMSDFDEPGTLAPTGLHLGGTKYMVIQGEAGAVIRGKKGPGGVTVRKTNQALIIGIYDEPMTPGQCNMIVERLGDYLLEQGM</sequence>
<proteinExistence type="evidence at protein level"/>
<keyword id="KW-0009">Actin-binding</keyword>
<keyword id="KW-0020">Allergen</keyword>
<keyword id="KW-0963">Cytoplasm</keyword>
<keyword id="KW-0206">Cytoskeleton</keyword>
<dbReference type="EMBL" id="Y15042">
    <property type="protein sequence ID" value="CAA75312.1"/>
    <property type="molecule type" value="mRNA"/>
</dbReference>
<dbReference type="PIR" id="T10769">
    <property type="entry name" value="T10769"/>
</dbReference>
<dbReference type="SMR" id="O65812"/>
<dbReference type="Allergome" id="397">
    <property type="allergen name" value="Hev b 8"/>
</dbReference>
<dbReference type="Allergome" id="398">
    <property type="allergen name" value="Hev b 8.0101"/>
</dbReference>
<dbReference type="GO" id="GO:0005938">
    <property type="term" value="C:cell cortex"/>
    <property type="evidence" value="ECO:0007669"/>
    <property type="project" value="TreeGrafter"/>
</dbReference>
<dbReference type="GO" id="GO:0005856">
    <property type="term" value="C:cytoskeleton"/>
    <property type="evidence" value="ECO:0007669"/>
    <property type="project" value="UniProtKB-SubCell"/>
</dbReference>
<dbReference type="GO" id="GO:0003785">
    <property type="term" value="F:actin monomer binding"/>
    <property type="evidence" value="ECO:0007669"/>
    <property type="project" value="TreeGrafter"/>
</dbReference>
<dbReference type="CDD" id="cd00148">
    <property type="entry name" value="PROF"/>
    <property type="match status" value="1"/>
</dbReference>
<dbReference type="FunFam" id="3.30.450.30:FF:000001">
    <property type="entry name" value="Profilin"/>
    <property type="match status" value="1"/>
</dbReference>
<dbReference type="Gene3D" id="3.30.450.30">
    <property type="entry name" value="Dynein light chain 2a, cytoplasmic"/>
    <property type="match status" value="1"/>
</dbReference>
<dbReference type="InterPro" id="IPR048278">
    <property type="entry name" value="PFN"/>
</dbReference>
<dbReference type="InterPro" id="IPR005455">
    <property type="entry name" value="PFN_euk"/>
</dbReference>
<dbReference type="InterPro" id="IPR036140">
    <property type="entry name" value="PFN_sf"/>
</dbReference>
<dbReference type="InterPro" id="IPR027310">
    <property type="entry name" value="Profilin_CS"/>
</dbReference>
<dbReference type="PANTHER" id="PTHR11604">
    <property type="entry name" value="PROFILIN"/>
    <property type="match status" value="1"/>
</dbReference>
<dbReference type="PANTHER" id="PTHR11604:SF49">
    <property type="entry name" value="PROFILIN-2"/>
    <property type="match status" value="1"/>
</dbReference>
<dbReference type="Pfam" id="PF00235">
    <property type="entry name" value="Profilin"/>
    <property type="match status" value="1"/>
</dbReference>
<dbReference type="PRINTS" id="PR00392">
    <property type="entry name" value="PROFILIN"/>
</dbReference>
<dbReference type="PRINTS" id="PR01640">
    <property type="entry name" value="PROFILINPLNT"/>
</dbReference>
<dbReference type="SMART" id="SM00392">
    <property type="entry name" value="PROF"/>
    <property type="match status" value="1"/>
</dbReference>
<dbReference type="SUPFAM" id="SSF55770">
    <property type="entry name" value="Profilin (actin-binding protein)"/>
    <property type="match status" value="1"/>
</dbReference>
<dbReference type="PROSITE" id="PS00414">
    <property type="entry name" value="PROFILIN"/>
    <property type="match status" value="1"/>
</dbReference>
<reference key="1">
    <citation type="journal article" date="2002" name="Allergy">
        <title>Assessment of profilin as an allergen for latex-sensitized patients.</title>
        <authorList>
            <person name="Nieto A."/>
            <person name="Mazon A."/>
            <person name="Boquete M."/>
            <person name="Carballada F."/>
            <person name="Asturias J.A."/>
            <person name="Martinez J."/>
            <person name="Martinez A."/>
            <person name="Palacios R."/>
        </authorList>
    </citation>
    <scope>NUCLEOTIDE SEQUENCE [MRNA]</scope>
    <scope>ALLERGEN</scope>
    <source>
        <strain>cv. RRIC 133</strain>
        <tissue>Leaf</tissue>
    </source>
</reference>
<name>PROF1_HEVBR</name>
<organism>
    <name type="scientific">Hevea brasiliensis</name>
    <name type="common">Para rubber tree</name>
    <name type="synonym">Siphonia brasiliensis</name>
    <dbReference type="NCBI Taxonomy" id="3981"/>
    <lineage>
        <taxon>Eukaryota</taxon>
        <taxon>Viridiplantae</taxon>
        <taxon>Streptophyta</taxon>
        <taxon>Embryophyta</taxon>
        <taxon>Tracheophyta</taxon>
        <taxon>Spermatophyta</taxon>
        <taxon>Magnoliopsida</taxon>
        <taxon>eudicotyledons</taxon>
        <taxon>Gunneridae</taxon>
        <taxon>Pentapetalae</taxon>
        <taxon>rosids</taxon>
        <taxon>fabids</taxon>
        <taxon>Malpighiales</taxon>
        <taxon>Euphorbiaceae</taxon>
        <taxon>Crotonoideae</taxon>
        <taxon>Micrandreae</taxon>
        <taxon>Hevea</taxon>
    </lineage>
</organism>
<feature type="initiator methionine" description="Removed" evidence="1">
    <location>
        <position position="1"/>
    </location>
</feature>
<feature type="chain" id="PRO_0000199633" description="Profilin-1">
    <location>
        <begin position="2"/>
        <end position="131"/>
    </location>
</feature>
<comment type="function">
    <text evidence="1">Binds to actin and affects the structure of the cytoskeleton. At high concentrations, profilin prevents the polymerization of actin, whereas it enhances it at low concentrations. By binding to PIP2, it inhibits the formation of IP3 and DG (By similarity).</text>
</comment>
<comment type="subunit">
    <text>Occurs in many kinds of cells as a complex with monomeric actin in a 1:1 ratio.</text>
</comment>
<comment type="subcellular location">
    <subcellularLocation>
        <location evidence="1">Cytoplasm</location>
        <location evidence="1">Cytoskeleton</location>
    </subcellularLocation>
</comment>
<comment type="allergen">
    <text evidence="2">Causes an allergic reaction in human. Involved in latex allergic reactions.</text>
</comment>
<comment type="similarity">
    <text evidence="3">Belongs to the profilin family.</text>
</comment>